<reference key="1">
    <citation type="journal article" date="2007" name="PLoS ONE">
        <title>Molecular correlates of host specialization in Staphylococcus aureus.</title>
        <authorList>
            <person name="Herron-Olson L."/>
            <person name="Fitzgerald J.R."/>
            <person name="Musser J.M."/>
            <person name="Kapur V."/>
        </authorList>
    </citation>
    <scope>NUCLEOTIDE SEQUENCE [LARGE SCALE GENOMIC DNA]</scope>
    <source>
        <strain>bovine RF122 / ET3-1</strain>
    </source>
</reference>
<protein>
    <recommendedName>
        <fullName>Pyruvate kinase</fullName>
        <shortName>PK</shortName>
        <ecNumber>2.7.1.40</ecNumber>
    </recommendedName>
</protein>
<accession>Q2YTE3</accession>
<dbReference type="EC" id="2.7.1.40"/>
<dbReference type="EMBL" id="AJ938182">
    <property type="protein sequence ID" value="CAI81245.1"/>
    <property type="molecule type" value="Genomic_DNA"/>
</dbReference>
<dbReference type="RefSeq" id="WP_001232650.1">
    <property type="nucleotide sequence ID" value="NC_007622.1"/>
</dbReference>
<dbReference type="SMR" id="Q2YTE3"/>
<dbReference type="KEGG" id="sab:SAB1556c"/>
<dbReference type="HOGENOM" id="CLU_015439_0_2_9"/>
<dbReference type="UniPathway" id="UPA00109">
    <property type="reaction ID" value="UER00188"/>
</dbReference>
<dbReference type="GO" id="GO:0005524">
    <property type="term" value="F:ATP binding"/>
    <property type="evidence" value="ECO:0007669"/>
    <property type="project" value="UniProtKB-KW"/>
</dbReference>
<dbReference type="GO" id="GO:0016301">
    <property type="term" value="F:kinase activity"/>
    <property type="evidence" value="ECO:0007669"/>
    <property type="project" value="UniProtKB-KW"/>
</dbReference>
<dbReference type="GO" id="GO:0000287">
    <property type="term" value="F:magnesium ion binding"/>
    <property type="evidence" value="ECO:0007669"/>
    <property type="project" value="InterPro"/>
</dbReference>
<dbReference type="GO" id="GO:0030955">
    <property type="term" value="F:potassium ion binding"/>
    <property type="evidence" value="ECO:0007669"/>
    <property type="project" value="InterPro"/>
</dbReference>
<dbReference type="GO" id="GO:0004743">
    <property type="term" value="F:pyruvate kinase activity"/>
    <property type="evidence" value="ECO:0007669"/>
    <property type="project" value="UniProtKB-EC"/>
</dbReference>
<dbReference type="FunFam" id="2.40.33.10:FF:000001">
    <property type="entry name" value="Pyruvate kinase"/>
    <property type="match status" value="1"/>
</dbReference>
<dbReference type="FunFam" id="3.20.20.60:FF:000001">
    <property type="entry name" value="Pyruvate kinase"/>
    <property type="match status" value="1"/>
</dbReference>
<dbReference type="FunFam" id="3.40.1380.20:FF:000017">
    <property type="entry name" value="Pyruvate kinase"/>
    <property type="match status" value="1"/>
</dbReference>
<dbReference type="Gene3D" id="3.20.20.60">
    <property type="entry name" value="Phosphoenolpyruvate-binding domains"/>
    <property type="match status" value="1"/>
</dbReference>
<dbReference type="Gene3D" id="3.50.30.10">
    <property type="entry name" value="Phosphohistidine domain"/>
    <property type="match status" value="1"/>
</dbReference>
<dbReference type="Gene3D" id="2.40.33.10">
    <property type="entry name" value="PK beta-barrel domain-like"/>
    <property type="match status" value="1"/>
</dbReference>
<dbReference type="Gene3D" id="3.40.1380.20">
    <property type="entry name" value="Pyruvate kinase, C-terminal domain"/>
    <property type="match status" value="1"/>
</dbReference>
<dbReference type="InterPro" id="IPR008279">
    <property type="entry name" value="PEP-util_enz_mobile_dom"/>
</dbReference>
<dbReference type="InterPro" id="IPR036637">
    <property type="entry name" value="Phosphohistidine_dom_sf"/>
</dbReference>
<dbReference type="InterPro" id="IPR001697">
    <property type="entry name" value="Pyr_Knase"/>
</dbReference>
<dbReference type="InterPro" id="IPR015813">
    <property type="entry name" value="Pyrv/PenolPyrv_kinase-like_dom"/>
</dbReference>
<dbReference type="InterPro" id="IPR040442">
    <property type="entry name" value="Pyrv_kinase-like_dom_sf"/>
</dbReference>
<dbReference type="InterPro" id="IPR011037">
    <property type="entry name" value="Pyrv_Knase-like_insert_dom_sf"/>
</dbReference>
<dbReference type="InterPro" id="IPR015793">
    <property type="entry name" value="Pyrv_Knase_brl"/>
</dbReference>
<dbReference type="InterPro" id="IPR015795">
    <property type="entry name" value="Pyrv_Knase_C"/>
</dbReference>
<dbReference type="InterPro" id="IPR036918">
    <property type="entry name" value="Pyrv_Knase_C_sf"/>
</dbReference>
<dbReference type="InterPro" id="IPR015806">
    <property type="entry name" value="Pyrv_Knase_insert_dom_sf"/>
</dbReference>
<dbReference type="NCBIfam" id="NF004491">
    <property type="entry name" value="PRK05826.1"/>
    <property type="match status" value="1"/>
</dbReference>
<dbReference type="NCBIfam" id="NF004978">
    <property type="entry name" value="PRK06354.1"/>
    <property type="match status" value="1"/>
</dbReference>
<dbReference type="NCBIfam" id="TIGR01064">
    <property type="entry name" value="pyruv_kin"/>
    <property type="match status" value="1"/>
</dbReference>
<dbReference type="PANTHER" id="PTHR11817">
    <property type="entry name" value="PYRUVATE KINASE"/>
    <property type="match status" value="1"/>
</dbReference>
<dbReference type="Pfam" id="PF00391">
    <property type="entry name" value="PEP-utilizers"/>
    <property type="match status" value="1"/>
</dbReference>
<dbReference type="Pfam" id="PF00224">
    <property type="entry name" value="PK"/>
    <property type="match status" value="1"/>
</dbReference>
<dbReference type="Pfam" id="PF02887">
    <property type="entry name" value="PK_C"/>
    <property type="match status" value="1"/>
</dbReference>
<dbReference type="PRINTS" id="PR01050">
    <property type="entry name" value="PYRUVTKNASE"/>
</dbReference>
<dbReference type="SUPFAM" id="SSF51621">
    <property type="entry name" value="Phosphoenolpyruvate/pyruvate domain"/>
    <property type="match status" value="1"/>
</dbReference>
<dbReference type="SUPFAM" id="SSF52009">
    <property type="entry name" value="Phosphohistidine domain"/>
    <property type="match status" value="1"/>
</dbReference>
<dbReference type="SUPFAM" id="SSF50800">
    <property type="entry name" value="PK beta-barrel domain-like"/>
    <property type="match status" value="1"/>
</dbReference>
<dbReference type="SUPFAM" id="SSF52935">
    <property type="entry name" value="PK C-terminal domain-like"/>
    <property type="match status" value="1"/>
</dbReference>
<organism>
    <name type="scientific">Staphylococcus aureus (strain bovine RF122 / ET3-1)</name>
    <dbReference type="NCBI Taxonomy" id="273036"/>
    <lineage>
        <taxon>Bacteria</taxon>
        <taxon>Bacillati</taxon>
        <taxon>Bacillota</taxon>
        <taxon>Bacilli</taxon>
        <taxon>Bacillales</taxon>
        <taxon>Staphylococcaceae</taxon>
        <taxon>Staphylococcus</taxon>
    </lineage>
</organism>
<gene>
    <name type="primary">pyk</name>
    <name type="ordered locus">SAB1556c</name>
</gene>
<keyword id="KW-0067">ATP-binding</keyword>
<keyword id="KW-0324">Glycolysis</keyword>
<keyword id="KW-0418">Kinase</keyword>
<keyword id="KW-0460">Magnesium</keyword>
<keyword id="KW-0479">Metal-binding</keyword>
<keyword id="KW-0547">Nucleotide-binding</keyword>
<keyword id="KW-0630">Potassium</keyword>
<keyword id="KW-0670">Pyruvate</keyword>
<keyword id="KW-0808">Transferase</keyword>
<evidence type="ECO:0000250" key="1"/>
<evidence type="ECO:0000250" key="2">
    <source>
        <dbReference type="UniProtKB" id="P14618"/>
    </source>
</evidence>
<evidence type="ECO:0000305" key="3"/>
<proteinExistence type="inferred from homology"/>
<feature type="chain" id="PRO_0000294128" description="Pyruvate kinase">
    <location>
        <begin position="1"/>
        <end position="585"/>
    </location>
</feature>
<feature type="binding site" evidence="1">
    <location>
        <position position="32"/>
    </location>
    <ligand>
        <name>substrate</name>
    </ligand>
</feature>
<feature type="binding site" evidence="2">
    <location>
        <begin position="34"/>
        <end position="37"/>
    </location>
    <ligand>
        <name>ATP</name>
        <dbReference type="ChEBI" id="CHEBI:30616"/>
    </ligand>
</feature>
<feature type="binding site" evidence="1">
    <location>
        <position position="34"/>
    </location>
    <ligand>
        <name>K(+)</name>
        <dbReference type="ChEBI" id="CHEBI:29103"/>
    </ligand>
</feature>
<feature type="binding site" evidence="1">
    <location>
        <position position="36"/>
    </location>
    <ligand>
        <name>K(+)</name>
        <dbReference type="ChEBI" id="CHEBI:29103"/>
    </ligand>
</feature>
<feature type="binding site" evidence="1">
    <location>
        <position position="66"/>
    </location>
    <ligand>
        <name>K(+)</name>
        <dbReference type="ChEBI" id="CHEBI:29103"/>
    </ligand>
</feature>
<feature type="binding site" evidence="1">
    <location>
        <position position="67"/>
    </location>
    <ligand>
        <name>K(+)</name>
        <dbReference type="ChEBI" id="CHEBI:29103"/>
    </ligand>
</feature>
<feature type="binding site" evidence="2">
    <location>
        <position position="73"/>
    </location>
    <ligand>
        <name>ATP</name>
        <dbReference type="ChEBI" id="CHEBI:30616"/>
    </ligand>
</feature>
<feature type="binding site" evidence="2">
    <location>
        <position position="156"/>
    </location>
    <ligand>
        <name>ATP</name>
        <dbReference type="ChEBI" id="CHEBI:30616"/>
    </ligand>
</feature>
<feature type="binding site" evidence="1">
    <location>
        <position position="221"/>
    </location>
    <ligand>
        <name>Mg(2+)</name>
        <dbReference type="ChEBI" id="CHEBI:18420"/>
    </ligand>
</feature>
<feature type="binding site" evidence="1">
    <location>
        <position position="244"/>
    </location>
    <ligand>
        <name>substrate</name>
    </ligand>
</feature>
<feature type="binding site" evidence="1">
    <location>
        <position position="245"/>
    </location>
    <ligand>
        <name>Mg(2+)</name>
        <dbReference type="ChEBI" id="CHEBI:18420"/>
    </ligand>
</feature>
<feature type="binding site" evidence="1">
    <location>
        <position position="245"/>
    </location>
    <ligand>
        <name>substrate</name>
    </ligand>
</feature>
<feature type="binding site" evidence="1">
    <location>
        <position position="277"/>
    </location>
    <ligand>
        <name>substrate</name>
    </ligand>
</feature>
<feature type="site" description="Transition state stabilizer" evidence="1">
    <location>
        <position position="219"/>
    </location>
</feature>
<name>KPYK_STAAB</name>
<sequence length="585" mass="63116">MRKTKIVCTIGPASESEEMIEKLINAGMNVARLNFSHGSHEEHKGRIDTIRKVAKRLDKIVAILLDTKGPEIRTHNMKDGIIELERGNEVIVSMNEVEGTPEKFSVTYENLINDVQVGSYILLDDGLIELQVKDIDHAKKEVKCDILNSGELKNKKGVNLPGVRVSLPGITEKDAEDIRFGIKENVDFIAASFVRRPSDVLEIREILEEQKANISVFPKIENQEGIDNIAEILEVSDGLMVARGDMGVEIPPEKVPMVQKDLIRQCNKLGKPVITATQMLDSMQRNPRATRAEASDVANAIYDGTDAVMLSGETAAGLYPEEAVKTMRNIAVSAEAAQDYKKLLSDRTKLVETSLVNAIGISVAHTALNLNVKAIVAATESGSTARTISKYRPHSDIIAVTPSEETARQCSIVWGVQPVVKKGRKSTDALLNNAVATAVETGRVTNGDLIIITAGVPTGETGTTNMMKIHLVGDEIANGQGIGRGSVVGTTLVAETVKDLEGKDLSDKVIVTNSIDETFVPYVEKALGLITEENGITSPSAIVGLEKGIPTVVGVEKAVKNISNNMLVTIDAAQGKIFEGYANVL</sequence>
<comment type="catalytic activity">
    <reaction>
        <text>pyruvate + ATP = phosphoenolpyruvate + ADP + H(+)</text>
        <dbReference type="Rhea" id="RHEA:18157"/>
        <dbReference type="ChEBI" id="CHEBI:15361"/>
        <dbReference type="ChEBI" id="CHEBI:15378"/>
        <dbReference type="ChEBI" id="CHEBI:30616"/>
        <dbReference type="ChEBI" id="CHEBI:58702"/>
        <dbReference type="ChEBI" id="CHEBI:456216"/>
        <dbReference type="EC" id="2.7.1.40"/>
    </reaction>
</comment>
<comment type="cofactor">
    <cofactor evidence="1">
        <name>Mg(2+)</name>
        <dbReference type="ChEBI" id="CHEBI:18420"/>
    </cofactor>
</comment>
<comment type="cofactor">
    <cofactor evidence="1">
        <name>K(+)</name>
        <dbReference type="ChEBI" id="CHEBI:29103"/>
    </cofactor>
</comment>
<comment type="pathway">
    <text>Carbohydrate degradation; glycolysis; pyruvate from D-glyceraldehyde 3-phosphate: step 5/5.</text>
</comment>
<comment type="similarity">
    <text evidence="3">Belongs to the pyruvate kinase family.</text>
</comment>
<comment type="similarity">
    <text evidence="3">In the C-terminal section; belongs to the PEP-utilizing enzyme family.</text>
</comment>